<protein>
    <recommendedName>
        <fullName evidence="11">Stonustoxin subunit alpha</fullName>
        <shortName evidence="11">SNTX subunit alpha</shortName>
    </recommendedName>
    <alternativeName>
        <fullName evidence="12">DELTA-synanceitoxin-Sh1a</fullName>
        <shortName evidence="12">DELTA-SYTX-Sh1a</shortName>
    </alternativeName>
    <alternativeName>
        <fullName evidence="10">Trachynilysin subunit alpha</fullName>
        <shortName evidence="10">TLY subunit alpha</shortName>
    </alternativeName>
</protein>
<reference key="1">
    <citation type="journal article" date="1996" name="J. Biol. Chem.">
        <title>Stonustoxin is a novel lethal factor from stonefish (Synanceja horrida) venom. cDNA cloning and characterization.</title>
        <authorList>
            <person name="Ghadessy F.J."/>
            <person name="Chen D."/>
            <person name="Kini R.M."/>
            <person name="Chung M.C.M."/>
            <person name="Jeyaseelan K."/>
            <person name="Khoo H.E."/>
            <person name="Yuen R."/>
        </authorList>
    </citation>
    <scope>NUCLEOTIDE SEQUENCE [MRNA]</scope>
    <scope>PROTEIN SEQUENCE OF 27-48; 348-356; 510-518 AND 681-693</scope>
    <source>
        <tissue>Venom</tissue>
        <tissue>Venom gland</tissue>
    </source>
</reference>
<reference key="2">
    <citation type="journal article" date="1991" name="Comp. Biochem. Physiol.">
        <title>Purification and partial characterization of stonustoxin (lethal factor) from Synanceja horrida venom.</title>
        <authorList>
            <person name="Poh C.H."/>
            <person name="Yuen R."/>
            <person name="Khoo H.E."/>
            <person name="Chung M."/>
            <person name="Gwee M."/>
            <person name="Gopalakrishnakone P."/>
        </authorList>
    </citation>
    <scope>FUNCTION</scope>
    <scope>SUBUNIT</scope>
    <scope>TOXIC DOSE</scope>
    <scope>SUBCELLULAR LOCATION</scope>
    <source>
        <tissue>Venom</tissue>
    </source>
</reference>
<reference key="3">
    <citation type="journal article" date="1993" name="Toxicon">
        <title>Stonustoxin: a highly potent endothelium-dependent vasorelaxant in the rat.</title>
        <authorList>
            <person name="Low K.S."/>
            <person name="Gwee M.C."/>
            <person name="Yuen R."/>
            <person name="Gopalakrishnakone P."/>
            <person name="Khoo H.E."/>
        </authorList>
    </citation>
    <scope>FUNCTION</scope>
</reference>
<reference key="4">
    <citation type="journal article" date="1994" name="Toxicon">
        <title>Stonustoxin: effects on neuromuscular function in vitro and in vivo.</title>
        <authorList>
            <person name="Low K.S."/>
            <person name="Gwee M.C."/>
            <person name="Yuen R."/>
            <person name="Gopalakrishnakone P."/>
            <person name="Khoo H.E."/>
        </authorList>
    </citation>
    <scope>FUNCTION IN NEUROMUSCULAR INHIBITION</scope>
</reference>
<reference key="5">
    <citation type="journal article" date="1995" name="Toxicon">
        <title>Effects of stonustoxin (lethal factor from Synanceja horrida venom) on platelet aggregation.</title>
        <authorList>
            <person name="Khoo H.E."/>
            <person name="Hon W.M."/>
            <person name="Lee S.H."/>
            <person name="Yuen R."/>
        </authorList>
    </citation>
    <scope>FUNCTION ON PLATELET AGGREGATION</scope>
</reference>
<reference key="6">
    <citation type="journal article" date="1996" name="Eur. J. Neurosci.">
        <title>Selective depletion of clear synaptic vesicles and enhanced quantal transmitter release at frog motor nerve endings produced by trachynilysin, a protein toxin isolated from stonefish (Synanceia trachynis) venom.</title>
        <authorList>
            <person name="Colasante C."/>
            <person name="Meunier F.A."/>
            <person name="Kreger A.S."/>
            <person name="Molgo J."/>
        </authorList>
    </citation>
    <scope>FUNCTION</scope>
    <source>
        <tissue>Venom</tissue>
    </source>
</reference>
<reference key="7">
    <citation type="journal article" date="1997" name="Biochem. J.">
        <title>Haemolytic activity of stonustoxin from stonefish (Synanceja horrida) venom: pore formation and the role of cationic amino acid residues.</title>
        <authorList>
            <person name="Chen D."/>
            <person name="Kini R.M."/>
            <person name="Yuen R."/>
            <person name="Khoo H.E."/>
        </authorList>
    </citation>
    <scope>FUNCTION IN CYTOLYSIS</scope>
    <source>
        <tissue>Venom</tissue>
    </source>
</reference>
<reference key="8">
    <citation type="journal article" date="2002" name="Biochem. Pharmacol.">
        <title>Characterization of the mechanism underlying stonustoxin-mediated relaxant response in the rat aorta in vitro.</title>
        <authorList>
            <person name="Sung J.M."/>
            <person name="Low K.S."/>
            <person name="Khoo H.E."/>
        </authorList>
    </citation>
    <scope>FUNCTION</scope>
</reference>
<reference key="9">
    <citation type="journal article" date="2002" name="J. Biol. Chem.">
        <title>Trachynilysin, a neurosecretory protein isolated from stonefish (Synanceia trachynis) venom, forms nonselective pores in the membrane of NG108-15 cells.</title>
        <authorList>
            <person name="Ouanounou G."/>
            <person name="Malo M."/>
            <person name="Stinnakre J."/>
            <person name="Kreger A.S."/>
            <person name="Molgo J."/>
        </authorList>
    </citation>
    <scope>FUNCTION</scope>
</reference>
<reference key="10">
    <citation type="journal article" date="1999" name="J. Struct. Biol.">
        <title>Crystallization and preliminary crystallographic study of stonustoxin, a protein lethal factor isolated from the stonefish (Synanceja horrida) venom.</title>
        <authorList>
            <person name="Yew W.S."/>
            <person name="Kolatkar P.R."/>
            <person name="Kuhn P."/>
            <person name="Khoo H.E."/>
        </authorList>
    </citation>
    <scope>CRYSTALLIZATION</scope>
</reference>
<reference key="11">
    <citation type="journal article" date="2015" name="Proc. Natl. Acad. Sci. U.S.A.">
        <title>Stonefish toxin defines an ancient branch of the perforin-like superfamily.</title>
        <authorList>
            <person name="Ellisdon A.M."/>
            <person name="Reboul C.F."/>
            <person name="Panjikar S."/>
            <person name="Huynh K."/>
            <person name="Oellig C.A."/>
            <person name="Winter K.L."/>
            <person name="Dunstone M.A."/>
            <person name="Hodgson W.C."/>
            <person name="Seymour J."/>
            <person name="Dearden P.K."/>
            <person name="Tweten R.K."/>
            <person name="Whisstock J.C."/>
            <person name="McGowan S."/>
        </authorList>
    </citation>
    <scope>X-RAY CRYSTALLOGRAPHY (3.1 ANGSTROMS) OF 1-703 IN COMPLEX WITH SUBUNIT B</scope>
    <scope>FUNCTION AS PORE-FORMING TOXIN</scope>
    <scope>MODEL OF PREPORE FORMATION</scope>
    <source>
        <tissue>Venom</tissue>
    </source>
</reference>
<accession>Q98989</accession>
<sequence length="703" mass="79524">MSSDLVMPALGRPFTLGMLYDARREKLIPGFSLFGDETLQKYQSSNAQRSSEFKIVASDSTESKSSAMDIEASLGVSFLGGLVEVGGSAKYLNNTKKYQNQSRVTLKYKATTVYKQFTAPPGTVTVQETAITEKGLATHVVTSILYGANAFFVSDSDKVEDTNLQDIQGKMEAAIKKIPTISIEGSASVQLTDEEKSLASNLSCKFHGDFLLESLPTTFEDAVKTYQTLPTLIGEDGANSVPMKVWLAPLKSYNSKAQQLIQEINVSKVRRIHTTLEELHKLKRRANEAMDVKLVQRIPLIHDKISNFQQIFQDYMLTVQKKIAEKLPLVRAGTESEQSLQKIIDDRAQSPFSNEKVSKWLDAVEREIAVLKSCAGMVEGTQAKFVSNQTELDREVLVGKVKHAVCFIFTSVERNDPYLKVLSDYWESPPSNNAKDVAPSTEDKWCFSTEVVLKMQQRAQTFCDHVNDFEKSRNVGFFITALENGKFQGASIYYYKEGSLATQDFTFPRMPFVQGYKKRSDLLWYACDLTFDRNTINNWISLSDNDTFAASEHGKRQNYPKHPERFVSFNQVLCNEGLMGKHYWEVEWNGYIDVGIAYISIPRKEIDFASAFGYNTYSWVLSYNPKIGYIERHKKREYNVRAPNPGFKRLGLFLDWRYGSISFYAVSSDEVHHLHTFKTKFTEPVYPAFSIGPAGNHGTLRLL</sequence>
<proteinExistence type="evidence at protein level"/>
<evidence type="ECO:0000250" key="1">
    <source>
        <dbReference type="UniProtKB" id="Q91453"/>
    </source>
</evidence>
<evidence type="ECO:0000255" key="2">
    <source>
        <dbReference type="PROSITE-ProRule" id="PRU00548"/>
    </source>
</evidence>
<evidence type="ECO:0000269" key="3">
    <source>
    </source>
</evidence>
<evidence type="ECO:0000269" key="4">
    <source>
    </source>
</evidence>
<evidence type="ECO:0000269" key="5">
    <source>
    </source>
</evidence>
<evidence type="ECO:0000269" key="6">
    <source>
    </source>
</evidence>
<evidence type="ECO:0000269" key="7">
    <source>
    </source>
</evidence>
<evidence type="ECO:0000269" key="8">
    <source>
    </source>
</evidence>
<evidence type="ECO:0000269" key="9">
    <source>
    </source>
</evidence>
<evidence type="ECO:0000303" key="10">
    <source>
    </source>
</evidence>
<evidence type="ECO:0000303" key="11">
    <source>
    </source>
</evidence>
<evidence type="ECO:0000305" key="12"/>
<evidence type="ECO:0000305" key="13">
    <source>
    </source>
</evidence>
<evidence type="ECO:0000305" key="14">
    <source>
    </source>
</evidence>
<evidence type="ECO:0007829" key="15">
    <source>
        <dbReference type="PDB" id="4WVM"/>
    </source>
</evidence>
<dbReference type="EMBL" id="U36237">
    <property type="protein sequence ID" value="AAC60022.1"/>
    <property type="molecule type" value="mRNA"/>
</dbReference>
<dbReference type="PDB" id="4WVM">
    <property type="method" value="X-ray"/>
    <property type="resolution" value="3.10 A"/>
    <property type="chains" value="A=1-703"/>
</dbReference>
<dbReference type="PDBsum" id="4WVM"/>
<dbReference type="SMR" id="Q98989"/>
<dbReference type="TCDB" id="1.C.125.1.1">
    <property type="family name" value="the pore-forming stonustoxin (stonustoxin) family"/>
</dbReference>
<dbReference type="GO" id="GO:0005576">
    <property type="term" value="C:extracellular region"/>
    <property type="evidence" value="ECO:0007669"/>
    <property type="project" value="UniProtKB-SubCell"/>
</dbReference>
<dbReference type="GO" id="GO:0015459">
    <property type="term" value="F:potassium channel regulator activity"/>
    <property type="evidence" value="ECO:0007669"/>
    <property type="project" value="UniProtKB-KW"/>
</dbReference>
<dbReference type="GO" id="GO:0090729">
    <property type="term" value="F:toxin activity"/>
    <property type="evidence" value="ECO:0007669"/>
    <property type="project" value="UniProtKB-KW"/>
</dbReference>
<dbReference type="GO" id="GO:0031640">
    <property type="term" value="P:killing of cells of another organism"/>
    <property type="evidence" value="ECO:0007669"/>
    <property type="project" value="UniProtKB-KW"/>
</dbReference>
<dbReference type="CDD" id="cd16040">
    <property type="entry name" value="SPRY_PRY_SNTX"/>
    <property type="match status" value="1"/>
</dbReference>
<dbReference type="Gene3D" id="2.60.120.920">
    <property type="match status" value="1"/>
</dbReference>
<dbReference type="InterPro" id="IPR001870">
    <property type="entry name" value="B30.2/SPRY"/>
</dbReference>
<dbReference type="InterPro" id="IPR043136">
    <property type="entry name" value="B30.2/SPRY_sf"/>
</dbReference>
<dbReference type="InterPro" id="IPR003879">
    <property type="entry name" value="Butyrophylin_SPRY"/>
</dbReference>
<dbReference type="InterPro" id="IPR013320">
    <property type="entry name" value="ConA-like_dom_sf"/>
</dbReference>
<dbReference type="InterPro" id="IPR052090">
    <property type="entry name" value="Cytolytic_pore-forming_toxin"/>
</dbReference>
<dbReference type="InterPro" id="IPR006574">
    <property type="entry name" value="PRY"/>
</dbReference>
<dbReference type="InterPro" id="IPR056072">
    <property type="entry name" value="SNTX_MACPF/CDC-like_dom"/>
</dbReference>
<dbReference type="InterPro" id="IPR003877">
    <property type="entry name" value="SPRY_dom"/>
</dbReference>
<dbReference type="InterPro" id="IPR048997">
    <property type="entry name" value="Stonustoxin-like_helical"/>
</dbReference>
<dbReference type="InterPro" id="IPR040581">
    <property type="entry name" value="Thioredoxin_11"/>
</dbReference>
<dbReference type="PANTHER" id="PTHR31594">
    <property type="entry name" value="AIG1-TYPE G DOMAIN-CONTAINING PROTEIN"/>
    <property type="match status" value="1"/>
</dbReference>
<dbReference type="PANTHER" id="PTHR31594:SF16">
    <property type="entry name" value="SI:CH211-281L24.3"/>
    <property type="match status" value="1"/>
</dbReference>
<dbReference type="Pfam" id="PF24674">
    <property type="entry name" value="MACPF_SNTX"/>
    <property type="match status" value="1"/>
</dbReference>
<dbReference type="Pfam" id="PF13765">
    <property type="entry name" value="PRY"/>
    <property type="match status" value="1"/>
</dbReference>
<dbReference type="Pfam" id="PF00622">
    <property type="entry name" value="SPRY"/>
    <property type="match status" value="1"/>
</dbReference>
<dbReference type="Pfam" id="PF21109">
    <property type="entry name" value="Stonustoxin_helical"/>
    <property type="match status" value="1"/>
</dbReference>
<dbReference type="Pfam" id="PF18078">
    <property type="entry name" value="Thioredoxin_11"/>
    <property type="match status" value="1"/>
</dbReference>
<dbReference type="PRINTS" id="PR01407">
    <property type="entry name" value="BUTYPHLNCDUF"/>
</dbReference>
<dbReference type="SMART" id="SM00589">
    <property type="entry name" value="PRY"/>
    <property type="match status" value="1"/>
</dbReference>
<dbReference type="SMART" id="SM00449">
    <property type="entry name" value="SPRY"/>
    <property type="match status" value="1"/>
</dbReference>
<dbReference type="SUPFAM" id="SSF49899">
    <property type="entry name" value="Concanavalin A-like lectins/glucanases"/>
    <property type="match status" value="1"/>
</dbReference>
<dbReference type="PROSITE" id="PS50188">
    <property type="entry name" value="B302_SPRY"/>
    <property type="match status" value="1"/>
</dbReference>
<comment type="function">
    <text evidence="3 4 5 6 8 9">This lethal (towards mammals) heterodimer induces hemolytic activities due to its ability to form pores in the cell membrane (PubMed:12177053, PubMed:1790672, PubMed:26627714, PubMed:9271089). The pore may be composed of 10 SNTX-alpha/beta heterodimers (PubMed:26627714). The toxin elicits potent hypotension which is endothelium-dependent and appears to be mediated by the nitric oxide pathway and activation of potassium channels (PubMed:11931843, PubMed:8310447). In addition, it displays edema-inducing activities, increases vascular permeability. It also shows myotoxic activities and interferes irreversibly with neuromuscular function (PubMed:8079369). It also induces irreversible platelet aggregation in rabbit or rat (but not in human or mouse) whole blood (PubMed:8533137). In addition, it has been observed to increase spontaneous quantal acetylcholine release from isolated frog cutaneous pectoris motor endings (PubMed:8921306).</text>
</comment>
<comment type="subunit">
    <text evidence="4 13">Heterodimer of alpha and beta subunits (PubMed:1790672); non-covalently linked.</text>
</comment>
<comment type="subcellular location">
    <subcellularLocation>
        <location evidence="4">Secreted</location>
    </subcellularLocation>
    <text evidence="7">Secreted into the venom gland lumen (PubMed:8810331). The secretion is proved by the fact that the complete sequence shown in this entry is found in the venom gland's lumen, although no signal peptide has been found (PubMed:8810331). This protein may follow a novel secretion pathway (PubMed:8810331). It has been reported that venom-secreting cells of stonefishes do not possess Golgi apparatus and rough endoplasmic reticulum (PubMed:8810331).</text>
</comment>
<comment type="tissue specificity">
    <text evidence="14">Expressed by the venom gland.</text>
</comment>
<comment type="domain">
    <text evidence="13">The first domain (residues 2-265) is structurally homologous to the membrane attack complex-ferforin/cholesterol-dependent cytolysin (MACPF/CDC) pore-forming domain. It makes numerous contacts with the FAT domain and comprise essentially the core pore-forming machinery.</text>
</comment>
<comment type="domain">
    <text evidence="13">The second domain is structurally homologous to the focal adhesion-targeting (FAT) domain (266-385). It makes numerous in cis contacts with the MACPF/CDC domain (first domain) and the thioredoxin (THX) domain (third domain) as well as extensive in trans interactions at the SNTX-alpha/beta interface.</text>
</comment>
<comment type="domain">
    <text evidence="13">The third domain corresponds to the thioredoxin (THX) domain. It makes numerous contacts with the second domain (FAT domain). Since it lacks the canonical catalytic residues, it may only play a purely structural role.</text>
</comment>
<comment type="domain">
    <text evidence="13">The fourth domain corresponds to the B30.2/SPRY domain. This domain would be responsible for initial interaction with the cell surface through either lipid- or protein-mediated interactions.</text>
</comment>
<comment type="PTM">
    <text evidence="14">Intrachain disulfide bonds may be present in the heterodimer (PubMed:8810331).</text>
</comment>
<comment type="PTM">
    <text evidence="14">Not glycosylated.</text>
</comment>
<comment type="toxic dose">
    <text evidence="4">LD(50) of stonustoxin is 0.017 mg/kg by intravenous injection.</text>
</comment>
<comment type="similarity">
    <text evidence="12">Belongs to the SNTX/VTX toxin family.</text>
</comment>
<comment type="caution">
    <text evidence="12">The toxin name trachynilysin was given according to the species S.trachynis. This species has finally been reclassified as a synonym of S.horrida.</text>
</comment>
<feature type="initiator methionine" description="Removed" evidence="1">
    <location>
        <position position="1"/>
    </location>
</feature>
<feature type="chain" id="PRO_0000221555" description="Stonustoxin subunit alpha" evidence="14">
    <location>
        <begin position="2"/>
        <end position="703"/>
    </location>
</feature>
<feature type="domain" description="B30.2/SPRY" evidence="2">
    <location>
        <begin position="508"/>
        <end position="703"/>
    </location>
</feature>
<feature type="region of interest" description="Structural MACPF/CDC pore-forming domain" evidence="13">
    <location>
        <begin position="2"/>
        <end position="265"/>
    </location>
</feature>
<feature type="region of interest" description="Structural FAT domain" evidence="13">
    <location>
        <begin position="266"/>
        <end position="385"/>
    </location>
</feature>
<feature type="region of interest" description="Thioredoxin (THX) domain" evidence="13">
    <location>
        <begin position="386"/>
        <end position="517"/>
    </location>
</feature>
<feature type="strand" evidence="15">
    <location>
        <begin position="5"/>
        <end position="8"/>
    </location>
</feature>
<feature type="strand" evidence="15">
    <location>
        <begin position="45"/>
        <end position="56"/>
    </location>
</feature>
<feature type="helix" evidence="15">
    <location>
        <begin position="61"/>
        <end position="67"/>
    </location>
</feature>
<feature type="helix" evidence="15">
    <location>
        <begin position="72"/>
        <end position="79"/>
    </location>
</feature>
<feature type="helix" evidence="15">
    <location>
        <begin position="87"/>
        <end position="91"/>
    </location>
</feature>
<feature type="strand" evidence="15">
    <location>
        <begin position="99"/>
        <end position="101"/>
    </location>
</feature>
<feature type="strand" evidence="15">
    <location>
        <begin position="103"/>
        <end position="115"/>
    </location>
</feature>
<feature type="strand" evidence="15">
    <location>
        <begin position="139"/>
        <end position="146"/>
    </location>
</feature>
<feature type="strand" evidence="15">
    <location>
        <begin position="149"/>
        <end position="155"/>
    </location>
</feature>
<feature type="helix" evidence="15">
    <location>
        <begin position="167"/>
        <end position="175"/>
    </location>
</feature>
<feature type="turn" evidence="15">
    <location>
        <begin position="176"/>
        <end position="180"/>
    </location>
</feature>
<feature type="helix" evidence="15">
    <location>
        <begin position="193"/>
        <end position="200"/>
    </location>
</feature>
<feature type="strand" evidence="15">
    <location>
        <begin position="203"/>
        <end position="209"/>
    </location>
</feature>
<feature type="helix" evidence="15">
    <location>
        <begin position="219"/>
        <end position="228"/>
    </location>
</feature>
<feature type="strand" evidence="15">
    <location>
        <begin position="242"/>
        <end position="248"/>
    </location>
</feature>
<feature type="helix" evidence="15">
    <location>
        <begin position="269"/>
        <end position="290"/>
    </location>
</feature>
<feature type="helix" evidence="15">
    <location>
        <begin position="293"/>
        <end position="297"/>
    </location>
</feature>
<feature type="helix" evidence="15">
    <location>
        <begin position="299"/>
        <end position="330"/>
    </location>
</feature>
<feature type="helix" evidence="15">
    <location>
        <begin position="338"/>
        <end position="349"/>
    </location>
</feature>
<feature type="helix" evidence="15">
    <location>
        <begin position="354"/>
        <end position="375"/>
    </location>
</feature>
<feature type="helix" evidence="15">
    <location>
        <begin position="376"/>
        <end position="378"/>
    </location>
</feature>
<feature type="helix" evidence="15">
    <location>
        <begin position="389"/>
        <end position="397"/>
    </location>
</feature>
<feature type="strand" evidence="15">
    <location>
        <begin position="402"/>
        <end position="409"/>
    </location>
</feature>
<feature type="helix" evidence="15">
    <location>
        <begin position="417"/>
        <end position="426"/>
    </location>
</feature>
<feature type="helix" evidence="15">
    <location>
        <begin position="445"/>
        <end position="447"/>
    </location>
</feature>
<feature type="helix" evidence="15">
    <location>
        <begin position="449"/>
        <end position="468"/>
    </location>
</feature>
<feature type="strand" evidence="15">
    <location>
        <begin position="475"/>
        <end position="481"/>
    </location>
</feature>
<feature type="strand" evidence="15">
    <location>
        <begin position="487"/>
        <end position="496"/>
    </location>
</feature>
<feature type="strand" evidence="15">
    <location>
        <begin position="499"/>
        <end position="504"/>
    </location>
</feature>
<feature type="helix" evidence="15">
    <location>
        <begin position="513"/>
        <end position="515"/>
    </location>
</feature>
<feature type="helix" evidence="15">
    <location>
        <begin position="519"/>
        <end position="523"/>
    </location>
</feature>
<feature type="turn" evidence="15">
    <location>
        <begin position="533"/>
        <end position="535"/>
    </location>
</feature>
<feature type="strand" evidence="15">
    <location>
        <begin position="540"/>
        <end position="542"/>
    </location>
</feature>
<feature type="strand" evidence="15">
    <location>
        <begin position="548"/>
        <end position="551"/>
    </location>
</feature>
<feature type="strand" evidence="15">
    <location>
        <begin position="553"/>
        <end position="555"/>
    </location>
</feature>
<feature type="strand" evidence="15">
    <location>
        <begin position="563"/>
        <end position="565"/>
    </location>
</feature>
<feature type="strand" evidence="15">
    <location>
        <begin position="567"/>
        <end position="575"/>
    </location>
</feature>
<feature type="strand" evidence="15">
    <location>
        <begin position="580"/>
        <end position="601"/>
    </location>
</feature>
<feature type="helix" evidence="15">
    <location>
        <begin position="608"/>
        <end position="610"/>
    </location>
</feature>
<feature type="strand" evidence="15">
    <location>
        <begin position="614"/>
        <end position="624"/>
    </location>
</feature>
<feature type="turn" evidence="15">
    <location>
        <begin position="625"/>
        <end position="627"/>
    </location>
</feature>
<feature type="strand" evidence="15">
    <location>
        <begin position="628"/>
        <end position="633"/>
    </location>
</feature>
<feature type="strand" evidence="15">
    <location>
        <begin position="636"/>
        <end position="640"/>
    </location>
</feature>
<feature type="strand" evidence="15">
    <location>
        <begin position="648"/>
        <end position="655"/>
    </location>
</feature>
<feature type="turn" evidence="15">
    <location>
        <begin position="656"/>
        <end position="659"/>
    </location>
</feature>
<feature type="strand" evidence="15">
    <location>
        <begin position="660"/>
        <end position="667"/>
    </location>
</feature>
<feature type="strand" evidence="15">
    <location>
        <begin position="670"/>
        <end position="678"/>
    </location>
</feature>
<feature type="strand" evidence="15">
    <location>
        <begin position="685"/>
        <end position="690"/>
    </location>
</feature>
<feature type="strand" evidence="15">
    <location>
        <begin position="698"/>
        <end position="702"/>
    </location>
</feature>
<keyword id="KW-0002">3D-structure</keyword>
<keyword id="KW-0204">Cytolysis</keyword>
<keyword id="KW-0903">Direct protein sequencing</keyword>
<keyword id="KW-1015">Disulfide bond</keyword>
<keyword id="KW-0354">Hemolysis</keyword>
<keyword id="KW-1199">Hemostasis impairing toxin</keyword>
<keyword id="KW-0872">Ion channel impairing toxin</keyword>
<keyword id="KW-0959">Myotoxin</keyword>
<keyword id="KW-0528">Neurotoxin</keyword>
<keyword id="KW-1202">Platelet aggregation activating toxin</keyword>
<keyword id="KW-0632">Potassium channel impairing toxin</keyword>
<keyword id="KW-0964">Secreted</keyword>
<keyword id="KW-0800">Toxin</keyword>
<name>STXA_SYNHO</name>
<organism>
    <name type="scientific">Synanceia horrida</name>
    <name type="common">Estuarine stonefish</name>
    <name type="synonym">Scorpaena horrida</name>
    <dbReference type="NCBI Taxonomy" id="13279"/>
    <lineage>
        <taxon>Eukaryota</taxon>
        <taxon>Metazoa</taxon>
        <taxon>Chordata</taxon>
        <taxon>Craniata</taxon>
        <taxon>Vertebrata</taxon>
        <taxon>Euteleostomi</taxon>
        <taxon>Actinopterygii</taxon>
        <taxon>Neopterygii</taxon>
        <taxon>Teleostei</taxon>
        <taxon>Neoteleostei</taxon>
        <taxon>Acanthomorphata</taxon>
        <taxon>Eupercaria</taxon>
        <taxon>Perciformes</taxon>
        <taxon>Scorpaenoidei</taxon>
        <taxon>Synanceiidae</taxon>
        <taxon>Synanceiinae</taxon>
        <taxon>Synanceia</taxon>
    </lineage>
</organism>